<accession>Q7Y779</accession>
<dbReference type="EMBL" id="AY324467">
    <property type="protein sequence ID" value="AAP88712.2"/>
    <property type="molecule type" value="Genomic_DNA"/>
</dbReference>
<dbReference type="EMBL" id="AY324468">
    <property type="protein sequence ID" value="AAP88713.2"/>
    <property type="molecule type" value="Genomic_DNA"/>
</dbReference>
<dbReference type="EMBL" id="AY324469">
    <property type="protein sequence ID" value="AAP88714.2"/>
    <property type="molecule type" value="Genomic_DNA"/>
</dbReference>
<dbReference type="SMR" id="Q7Y779"/>
<dbReference type="GO" id="GO:0005743">
    <property type="term" value="C:mitochondrial inner membrane"/>
    <property type="evidence" value="ECO:0007669"/>
    <property type="project" value="UniProtKB-SubCell"/>
</dbReference>
<dbReference type="GO" id="GO:0045275">
    <property type="term" value="C:respiratory chain complex III"/>
    <property type="evidence" value="ECO:0007669"/>
    <property type="project" value="InterPro"/>
</dbReference>
<dbReference type="GO" id="GO:0046872">
    <property type="term" value="F:metal ion binding"/>
    <property type="evidence" value="ECO:0007669"/>
    <property type="project" value="UniProtKB-KW"/>
</dbReference>
<dbReference type="GO" id="GO:0008121">
    <property type="term" value="F:ubiquinol-cytochrome-c reductase activity"/>
    <property type="evidence" value="ECO:0007669"/>
    <property type="project" value="InterPro"/>
</dbReference>
<dbReference type="GO" id="GO:0006122">
    <property type="term" value="P:mitochondrial electron transport, ubiquinol to cytochrome c"/>
    <property type="evidence" value="ECO:0007669"/>
    <property type="project" value="TreeGrafter"/>
</dbReference>
<dbReference type="CDD" id="cd00290">
    <property type="entry name" value="cytochrome_b_C"/>
    <property type="match status" value="1"/>
</dbReference>
<dbReference type="CDD" id="cd00284">
    <property type="entry name" value="Cytochrome_b_N"/>
    <property type="match status" value="1"/>
</dbReference>
<dbReference type="FunFam" id="1.20.810.10:FF:000002">
    <property type="entry name" value="Cytochrome b"/>
    <property type="match status" value="1"/>
</dbReference>
<dbReference type="Gene3D" id="1.20.810.10">
    <property type="entry name" value="Cytochrome Bc1 Complex, Chain C"/>
    <property type="match status" value="1"/>
</dbReference>
<dbReference type="InterPro" id="IPR005798">
    <property type="entry name" value="Cyt_b/b6_C"/>
</dbReference>
<dbReference type="InterPro" id="IPR036150">
    <property type="entry name" value="Cyt_b/b6_C_sf"/>
</dbReference>
<dbReference type="InterPro" id="IPR005797">
    <property type="entry name" value="Cyt_b/b6_N"/>
</dbReference>
<dbReference type="InterPro" id="IPR027387">
    <property type="entry name" value="Cytb/b6-like_sf"/>
</dbReference>
<dbReference type="InterPro" id="IPR030689">
    <property type="entry name" value="Cytochrome_b"/>
</dbReference>
<dbReference type="InterPro" id="IPR048260">
    <property type="entry name" value="Cytochrome_b_C_euk/bac"/>
</dbReference>
<dbReference type="InterPro" id="IPR048259">
    <property type="entry name" value="Cytochrome_b_N_euk/bac"/>
</dbReference>
<dbReference type="InterPro" id="IPR016174">
    <property type="entry name" value="Di-haem_cyt_TM"/>
</dbReference>
<dbReference type="PANTHER" id="PTHR19271">
    <property type="entry name" value="CYTOCHROME B"/>
    <property type="match status" value="1"/>
</dbReference>
<dbReference type="PANTHER" id="PTHR19271:SF16">
    <property type="entry name" value="CYTOCHROME B"/>
    <property type="match status" value="1"/>
</dbReference>
<dbReference type="Pfam" id="PF00032">
    <property type="entry name" value="Cytochrom_B_C"/>
    <property type="match status" value="1"/>
</dbReference>
<dbReference type="Pfam" id="PF00033">
    <property type="entry name" value="Cytochrome_B"/>
    <property type="match status" value="1"/>
</dbReference>
<dbReference type="PIRSF" id="PIRSF038885">
    <property type="entry name" value="COB"/>
    <property type="match status" value="1"/>
</dbReference>
<dbReference type="SUPFAM" id="SSF81648">
    <property type="entry name" value="a domain/subunit of cytochrome bc1 complex (Ubiquinol-cytochrome c reductase)"/>
    <property type="match status" value="1"/>
</dbReference>
<dbReference type="SUPFAM" id="SSF81342">
    <property type="entry name" value="Transmembrane di-heme cytochromes"/>
    <property type="match status" value="1"/>
</dbReference>
<dbReference type="PROSITE" id="PS51003">
    <property type="entry name" value="CYTB_CTER"/>
    <property type="match status" value="1"/>
</dbReference>
<dbReference type="PROSITE" id="PS51002">
    <property type="entry name" value="CYTB_NTER"/>
    <property type="match status" value="1"/>
</dbReference>
<evidence type="ECO:0000250" key="1"/>
<evidence type="ECO:0000250" key="2">
    <source>
        <dbReference type="UniProtKB" id="P00157"/>
    </source>
</evidence>
<evidence type="ECO:0000255" key="3">
    <source>
        <dbReference type="PROSITE-ProRule" id="PRU00967"/>
    </source>
</evidence>
<evidence type="ECO:0000255" key="4">
    <source>
        <dbReference type="PROSITE-ProRule" id="PRU00968"/>
    </source>
</evidence>
<protein>
    <recommendedName>
        <fullName>Cytochrome b</fullName>
    </recommendedName>
    <alternativeName>
        <fullName>Complex III subunit 3</fullName>
    </alternativeName>
    <alternativeName>
        <fullName>Complex III subunit III</fullName>
    </alternativeName>
    <alternativeName>
        <fullName>Cytochrome b-c1 complex subunit 3</fullName>
    </alternativeName>
    <alternativeName>
        <fullName>Ubiquinol-cytochrome-c reductase complex cytochrome b subunit</fullName>
    </alternativeName>
</protein>
<proteinExistence type="inferred from homology"/>
<gene>
    <name type="primary">MT-CYB</name>
    <name type="synonym">COB</name>
    <name type="synonym">CYTB</name>
    <name type="synonym">MTCYB</name>
</gene>
<feature type="chain" id="PRO_0000254986" description="Cytochrome b">
    <location>
        <begin position="1"/>
        <end position="381"/>
    </location>
</feature>
<feature type="transmembrane region" description="Helical" evidence="2">
    <location>
        <begin position="33"/>
        <end position="53"/>
    </location>
</feature>
<feature type="transmembrane region" description="Helical" evidence="2">
    <location>
        <begin position="77"/>
        <end position="98"/>
    </location>
</feature>
<feature type="transmembrane region" description="Helical" evidence="2">
    <location>
        <begin position="113"/>
        <end position="133"/>
    </location>
</feature>
<feature type="transmembrane region" description="Helical" evidence="2">
    <location>
        <begin position="178"/>
        <end position="198"/>
    </location>
</feature>
<feature type="transmembrane region" description="Helical" evidence="2">
    <location>
        <begin position="226"/>
        <end position="246"/>
    </location>
</feature>
<feature type="transmembrane region" description="Helical" evidence="2">
    <location>
        <begin position="288"/>
        <end position="308"/>
    </location>
</feature>
<feature type="transmembrane region" description="Helical" evidence="2">
    <location>
        <begin position="320"/>
        <end position="340"/>
    </location>
</feature>
<feature type="transmembrane region" description="Helical" evidence="2">
    <location>
        <begin position="347"/>
        <end position="367"/>
    </location>
</feature>
<feature type="binding site" description="axial binding residue" evidence="2">
    <location>
        <position position="83"/>
    </location>
    <ligand>
        <name>heme b</name>
        <dbReference type="ChEBI" id="CHEBI:60344"/>
        <label>b562</label>
    </ligand>
    <ligandPart>
        <name>Fe</name>
        <dbReference type="ChEBI" id="CHEBI:18248"/>
    </ligandPart>
</feature>
<feature type="binding site" description="axial binding residue" evidence="2">
    <location>
        <position position="97"/>
    </location>
    <ligand>
        <name>heme b</name>
        <dbReference type="ChEBI" id="CHEBI:60344"/>
        <label>b566</label>
    </ligand>
    <ligandPart>
        <name>Fe</name>
        <dbReference type="ChEBI" id="CHEBI:18248"/>
    </ligandPart>
</feature>
<feature type="binding site" description="axial binding residue" evidence="2">
    <location>
        <position position="182"/>
    </location>
    <ligand>
        <name>heme b</name>
        <dbReference type="ChEBI" id="CHEBI:60344"/>
        <label>b562</label>
    </ligand>
    <ligandPart>
        <name>Fe</name>
        <dbReference type="ChEBI" id="CHEBI:18248"/>
    </ligandPart>
</feature>
<feature type="binding site" description="axial binding residue" evidence="2">
    <location>
        <position position="196"/>
    </location>
    <ligand>
        <name>heme b</name>
        <dbReference type="ChEBI" id="CHEBI:60344"/>
        <label>b566</label>
    </ligand>
    <ligandPart>
        <name>Fe</name>
        <dbReference type="ChEBI" id="CHEBI:18248"/>
    </ligandPart>
</feature>
<feature type="binding site" evidence="2">
    <location>
        <position position="201"/>
    </location>
    <ligand>
        <name>a ubiquinone</name>
        <dbReference type="ChEBI" id="CHEBI:16389"/>
    </ligand>
</feature>
<organism>
    <name type="scientific">Apomys hylocetes</name>
    <name type="common">Mindanao mossy forest mouse</name>
    <dbReference type="NCBI Taxonomy" id="238004"/>
    <lineage>
        <taxon>Eukaryota</taxon>
        <taxon>Metazoa</taxon>
        <taxon>Chordata</taxon>
        <taxon>Craniata</taxon>
        <taxon>Vertebrata</taxon>
        <taxon>Euteleostomi</taxon>
        <taxon>Mammalia</taxon>
        <taxon>Eutheria</taxon>
        <taxon>Euarchontoglires</taxon>
        <taxon>Glires</taxon>
        <taxon>Rodentia</taxon>
        <taxon>Myomorpha</taxon>
        <taxon>Muroidea</taxon>
        <taxon>Muridae</taxon>
        <taxon>Murinae</taxon>
        <taxon>Apomys</taxon>
    </lineage>
</organism>
<comment type="function">
    <text evidence="2">Component of the ubiquinol-cytochrome c reductase complex (complex III or cytochrome b-c1 complex) that is part of the mitochondrial respiratory chain. The b-c1 complex mediates electron transfer from ubiquinol to cytochrome c. Contributes to the generation of a proton gradient across the mitochondrial membrane that is then used for ATP synthesis.</text>
</comment>
<comment type="cofactor">
    <cofactor evidence="2">
        <name>heme b</name>
        <dbReference type="ChEBI" id="CHEBI:60344"/>
    </cofactor>
    <text evidence="2">Binds 2 heme b groups non-covalently.</text>
</comment>
<comment type="subunit">
    <text evidence="2">The cytochrome bc1 complex contains 11 subunits: 3 respiratory subunits (MT-CYB, CYC1 and UQCRFS1), 2 core proteins (UQCRC1 and UQCRC2) and 6 low-molecular weight proteins (UQCRH/QCR6, UQCRB/QCR7, UQCRQ/QCR8, UQCR10/QCR9, UQCR11/QCR10 and a cleavage product of UQCRFS1). This cytochrome bc1 complex then forms a dimer.</text>
</comment>
<comment type="subcellular location">
    <subcellularLocation>
        <location evidence="2">Mitochondrion inner membrane</location>
        <topology evidence="2">Multi-pass membrane protein</topology>
    </subcellularLocation>
</comment>
<comment type="miscellaneous">
    <text evidence="1">Heme 1 (or BL or b562) is low-potential and absorbs at about 562 nm, and heme 2 (or BH or b566) is high-potential and absorbs at about 566 nm.</text>
</comment>
<comment type="similarity">
    <text evidence="3 4">Belongs to the cytochrome b family.</text>
</comment>
<comment type="caution">
    <text evidence="2">The full-length protein contains only eight transmembrane helices, not nine as predicted by bioinformatics tools.</text>
</comment>
<name>CYB_APOHY</name>
<keyword id="KW-0249">Electron transport</keyword>
<keyword id="KW-0349">Heme</keyword>
<keyword id="KW-0408">Iron</keyword>
<keyword id="KW-0472">Membrane</keyword>
<keyword id="KW-0479">Metal-binding</keyword>
<keyword id="KW-0496">Mitochondrion</keyword>
<keyword id="KW-0999">Mitochondrion inner membrane</keyword>
<keyword id="KW-0679">Respiratory chain</keyword>
<keyword id="KW-0812">Transmembrane</keyword>
<keyword id="KW-1133">Transmembrane helix</keyword>
<keyword id="KW-0813">Transport</keyword>
<keyword id="KW-0830">Ubiquinone</keyword>
<reference key="1">
    <citation type="journal article" date="2003" name="Biol. J. Linn. Soc. Lond.">
        <title>Molecular phylogeny of the endemic Philippine rodent Apomys (Muridae) and the dynamics of diversification in an oceanic archipelago.</title>
        <authorList>
            <person name="Steppan S.J."/>
            <person name="Zawadzki C."/>
            <person name="Heaney L.R."/>
        </authorList>
    </citation>
    <scope>NUCLEOTIDE SEQUENCE [GENOMIC DNA]</scope>
</reference>
<geneLocation type="mitochondrion"/>
<sequence length="381" mass="43139">MTNIRKTHPLIKIINHSFIDLPAPSNISSWWNFGSLLGLCLIIQIITGLFLAMHYTSDTTTAFSSVTHICRDVNYGWLIRYMHANGASMFFICLFIHIGRGIYYGSYTFMETWNIGVILLFAVMATAFMGYVLPWGQMSFWGATVITNLLSAIPYIGTTLVEWIWGGFSVDKATLTRFFAFHFILPFIIAALVIVHLLFLHETGSNNPTGLDSDADKIPFHPYYTIKDLLGVFLLILFLMTLVLFFPDLLGDPDNYTPANPLNTPPHIKPEWYFLFAYAILRSIPNKLGGVLALILSILILAFMPFLHTSKQRSLMFRPITQVLYWMLVANLLVLTWIGGQPVEHPFVIIGQLASISYFSIILILMPISGIIEDKLLKWSL</sequence>